<comment type="function">
    <text evidence="1">Catalyzes the interconversion of 2-phosphoglycerate and 3-phosphoglycerate.</text>
</comment>
<comment type="catalytic activity">
    <reaction evidence="1">
        <text>(2R)-2-phosphoglycerate = (2R)-3-phosphoglycerate</text>
        <dbReference type="Rhea" id="RHEA:15901"/>
        <dbReference type="ChEBI" id="CHEBI:58272"/>
        <dbReference type="ChEBI" id="CHEBI:58289"/>
        <dbReference type="EC" id="5.4.2.12"/>
    </reaction>
</comment>
<comment type="cofactor">
    <cofactor evidence="1">
        <name>Mn(2+)</name>
        <dbReference type="ChEBI" id="CHEBI:29035"/>
    </cofactor>
    <text evidence="1">Binds 2 manganese ions per subunit.</text>
</comment>
<comment type="pathway">
    <text evidence="1">Carbohydrate degradation; glycolysis; pyruvate from D-glyceraldehyde 3-phosphate: step 3/5.</text>
</comment>
<comment type="subunit">
    <text evidence="1">Monomer.</text>
</comment>
<comment type="similarity">
    <text evidence="1">Belongs to the BPG-independent phosphoglycerate mutase family.</text>
</comment>
<keyword id="KW-0324">Glycolysis</keyword>
<keyword id="KW-0413">Isomerase</keyword>
<keyword id="KW-0464">Manganese</keyword>
<keyword id="KW-0479">Metal-binding</keyword>
<keyword id="KW-1185">Reference proteome</keyword>
<proteinExistence type="inferred from homology"/>
<organism>
    <name type="scientific">Shigella flexneri</name>
    <dbReference type="NCBI Taxonomy" id="623"/>
    <lineage>
        <taxon>Bacteria</taxon>
        <taxon>Pseudomonadati</taxon>
        <taxon>Pseudomonadota</taxon>
        <taxon>Gammaproteobacteria</taxon>
        <taxon>Enterobacterales</taxon>
        <taxon>Enterobacteriaceae</taxon>
        <taxon>Shigella</taxon>
    </lineage>
</organism>
<gene>
    <name evidence="1" type="primary">gpmI</name>
    <name type="ordered locus">SF3651</name>
    <name type="ordered locus">S4117</name>
</gene>
<evidence type="ECO:0000255" key="1">
    <source>
        <dbReference type="HAMAP-Rule" id="MF_01038"/>
    </source>
</evidence>
<feature type="chain" id="PRO_0000212204" description="2,3-bisphosphoglycerate-independent phosphoglycerate mutase">
    <location>
        <begin position="1"/>
        <end position="514"/>
    </location>
</feature>
<feature type="active site" description="Phosphoserine intermediate" evidence="1">
    <location>
        <position position="64"/>
    </location>
</feature>
<feature type="binding site" evidence="1">
    <location>
        <position position="14"/>
    </location>
    <ligand>
        <name>Mn(2+)</name>
        <dbReference type="ChEBI" id="CHEBI:29035"/>
        <label>2</label>
    </ligand>
</feature>
<feature type="binding site" evidence="1">
    <location>
        <position position="64"/>
    </location>
    <ligand>
        <name>Mn(2+)</name>
        <dbReference type="ChEBI" id="CHEBI:29035"/>
        <label>2</label>
    </ligand>
</feature>
<feature type="binding site" evidence="1">
    <location>
        <position position="125"/>
    </location>
    <ligand>
        <name>substrate</name>
    </ligand>
</feature>
<feature type="binding site" evidence="1">
    <location>
        <begin position="155"/>
        <end position="156"/>
    </location>
    <ligand>
        <name>substrate</name>
    </ligand>
</feature>
<feature type="binding site" evidence="1">
    <location>
        <position position="187"/>
    </location>
    <ligand>
        <name>substrate</name>
    </ligand>
</feature>
<feature type="binding site" evidence="1">
    <location>
        <position position="193"/>
    </location>
    <ligand>
        <name>substrate</name>
    </ligand>
</feature>
<feature type="binding site" evidence="1">
    <location>
        <begin position="263"/>
        <end position="266"/>
    </location>
    <ligand>
        <name>substrate</name>
    </ligand>
</feature>
<feature type="binding site" evidence="1">
    <location>
        <position position="336"/>
    </location>
    <ligand>
        <name>substrate</name>
    </ligand>
</feature>
<feature type="binding site" evidence="1">
    <location>
        <position position="403"/>
    </location>
    <ligand>
        <name>Mn(2+)</name>
        <dbReference type="ChEBI" id="CHEBI:29035"/>
        <label>1</label>
    </ligand>
</feature>
<feature type="binding site" evidence="1">
    <location>
        <position position="407"/>
    </location>
    <ligand>
        <name>Mn(2+)</name>
        <dbReference type="ChEBI" id="CHEBI:29035"/>
        <label>1</label>
    </ligand>
</feature>
<feature type="binding site" evidence="1">
    <location>
        <position position="444"/>
    </location>
    <ligand>
        <name>Mn(2+)</name>
        <dbReference type="ChEBI" id="CHEBI:29035"/>
        <label>2</label>
    </ligand>
</feature>
<feature type="binding site" evidence="1">
    <location>
        <position position="445"/>
    </location>
    <ligand>
        <name>Mn(2+)</name>
        <dbReference type="ChEBI" id="CHEBI:29035"/>
        <label>2</label>
    </ligand>
</feature>
<feature type="binding site" evidence="1">
    <location>
        <position position="463"/>
    </location>
    <ligand>
        <name>Mn(2+)</name>
        <dbReference type="ChEBI" id="CHEBI:29035"/>
        <label>1</label>
    </ligand>
</feature>
<sequence length="514" mass="56102">MSVSKKPMVLVILDGYGYREEQQDNAIFSAKTPVMDALWANRPHTLIDASGLEVGLPDRQMGNSEVGHVNLGAGRIVYQDLTRLDVEIKDRAFFANPVLAGAVHKAKNAGKAVHIMGLLSAGGVHSHEDHIMAMVELAAERGAEKIYLHAFLDGRDTPPRSAESSLKKFEEKFAALGKGRVASIIGRYYAMDRDNRWDRVEKAYDLLTLAQGEFQADTAVAGLQAAYARDENDEFVKATVIRAEGQPDAAMEDGDALIFMNFRADRAREITRAFVNADFDGFARKKVVNVDFVMLTEYAADIKTAVAYPPASLVNTFGEWMAKNDKTQLRISETEKYAHVTFFFNGGVEESFKGEDRILINSPKVATYDLQPEMSSAELTEKLVAAIKSGKYDTIICNYPNGDMVGHTGVMEAAVKAVEALDHCVEEVAKAVESVGGQLLITADHGNAEQMRDPATGQAHTAHTNLPVPLIYVGDKNVKAVAGGKLSDIAPTMLSLMGMEIPQEMTGKPLFIVE</sequence>
<accession>P59176</accession>
<reference key="1">
    <citation type="journal article" date="2002" name="Nucleic Acids Res.">
        <title>Genome sequence of Shigella flexneri 2a: insights into pathogenicity through comparison with genomes of Escherichia coli K12 and O157.</title>
        <authorList>
            <person name="Jin Q."/>
            <person name="Yuan Z."/>
            <person name="Xu J."/>
            <person name="Wang Y."/>
            <person name="Shen Y."/>
            <person name="Lu W."/>
            <person name="Wang J."/>
            <person name="Liu H."/>
            <person name="Yang J."/>
            <person name="Yang F."/>
            <person name="Zhang X."/>
            <person name="Zhang J."/>
            <person name="Yang G."/>
            <person name="Wu H."/>
            <person name="Qu D."/>
            <person name="Dong J."/>
            <person name="Sun L."/>
            <person name="Xue Y."/>
            <person name="Zhao A."/>
            <person name="Gao Y."/>
            <person name="Zhu J."/>
            <person name="Kan B."/>
            <person name="Ding K."/>
            <person name="Chen S."/>
            <person name="Cheng H."/>
            <person name="Yao Z."/>
            <person name="He B."/>
            <person name="Chen R."/>
            <person name="Ma D."/>
            <person name="Qiang B."/>
            <person name="Wen Y."/>
            <person name="Hou Y."/>
            <person name="Yu J."/>
        </authorList>
    </citation>
    <scope>NUCLEOTIDE SEQUENCE [LARGE SCALE GENOMIC DNA]</scope>
    <source>
        <strain>301 / Serotype 2a</strain>
    </source>
</reference>
<reference key="2">
    <citation type="journal article" date="2003" name="Infect. Immun.">
        <title>Complete genome sequence and comparative genomics of Shigella flexneri serotype 2a strain 2457T.</title>
        <authorList>
            <person name="Wei J."/>
            <person name="Goldberg M.B."/>
            <person name="Burland V."/>
            <person name="Venkatesan M.M."/>
            <person name="Deng W."/>
            <person name="Fournier G."/>
            <person name="Mayhew G.F."/>
            <person name="Plunkett G. III"/>
            <person name="Rose D.J."/>
            <person name="Darling A."/>
            <person name="Mau B."/>
            <person name="Perna N.T."/>
            <person name="Payne S.M."/>
            <person name="Runyen-Janecky L.J."/>
            <person name="Zhou S."/>
            <person name="Schwartz D.C."/>
            <person name="Blattner F.R."/>
        </authorList>
    </citation>
    <scope>NUCLEOTIDE SEQUENCE [LARGE SCALE GENOMIC DNA]</scope>
    <source>
        <strain>ATCC 700930 / 2457T / Serotype 2a</strain>
    </source>
</reference>
<dbReference type="EC" id="5.4.2.12" evidence="1"/>
<dbReference type="EMBL" id="AE005674">
    <property type="protein sequence ID" value="AAN45098.2"/>
    <property type="molecule type" value="Genomic_DNA"/>
</dbReference>
<dbReference type="EMBL" id="AE014073">
    <property type="protein sequence ID" value="AAP19094.1"/>
    <property type="molecule type" value="Genomic_DNA"/>
</dbReference>
<dbReference type="SMR" id="P59176"/>
<dbReference type="STRING" id="198214.SF3651"/>
<dbReference type="PaxDb" id="198214-SF3651"/>
<dbReference type="KEGG" id="sfl:SF3651"/>
<dbReference type="KEGG" id="sfx:S4117"/>
<dbReference type="PATRIC" id="fig|198214.7.peg.4311"/>
<dbReference type="HOGENOM" id="CLU_026099_2_0_6"/>
<dbReference type="UniPathway" id="UPA00109">
    <property type="reaction ID" value="UER00186"/>
</dbReference>
<dbReference type="Proteomes" id="UP000001006">
    <property type="component" value="Chromosome"/>
</dbReference>
<dbReference type="Proteomes" id="UP000002673">
    <property type="component" value="Chromosome"/>
</dbReference>
<dbReference type="GO" id="GO:0005829">
    <property type="term" value="C:cytosol"/>
    <property type="evidence" value="ECO:0007669"/>
    <property type="project" value="TreeGrafter"/>
</dbReference>
<dbReference type="GO" id="GO:0030145">
    <property type="term" value="F:manganese ion binding"/>
    <property type="evidence" value="ECO:0007669"/>
    <property type="project" value="UniProtKB-UniRule"/>
</dbReference>
<dbReference type="GO" id="GO:0004619">
    <property type="term" value="F:phosphoglycerate mutase activity"/>
    <property type="evidence" value="ECO:0007669"/>
    <property type="project" value="UniProtKB-EC"/>
</dbReference>
<dbReference type="GO" id="GO:0006007">
    <property type="term" value="P:glucose catabolic process"/>
    <property type="evidence" value="ECO:0007669"/>
    <property type="project" value="InterPro"/>
</dbReference>
<dbReference type="GO" id="GO:0006096">
    <property type="term" value="P:glycolytic process"/>
    <property type="evidence" value="ECO:0007669"/>
    <property type="project" value="UniProtKB-UniRule"/>
</dbReference>
<dbReference type="CDD" id="cd16010">
    <property type="entry name" value="iPGM"/>
    <property type="match status" value="1"/>
</dbReference>
<dbReference type="FunFam" id="3.40.1450.10:FF:000001">
    <property type="entry name" value="2,3-bisphosphoglycerate-independent phosphoglycerate mutase"/>
    <property type="match status" value="1"/>
</dbReference>
<dbReference type="FunFam" id="3.40.720.10:FF:000001">
    <property type="entry name" value="2,3-bisphosphoglycerate-independent phosphoglycerate mutase"/>
    <property type="match status" value="1"/>
</dbReference>
<dbReference type="Gene3D" id="3.40.720.10">
    <property type="entry name" value="Alkaline Phosphatase, subunit A"/>
    <property type="match status" value="1"/>
</dbReference>
<dbReference type="Gene3D" id="3.40.1450.10">
    <property type="entry name" value="BPG-independent phosphoglycerate mutase, domain B"/>
    <property type="match status" value="1"/>
</dbReference>
<dbReference type="HAMAP" id="MF_01038">
    <property type="entry name" value="GpmI"/>
    <property type="match status" value="1"/>
</dbReference>
<dbReference type="InterPro" id="IPR017850">
    <property type="entry name" value="Alkaline_phosphatase_core_sf"/>
</dbReference>
<dbReference type="InterPro" id="IPR011258">
    <property type="entry name" value="BPG-indep_PGM_N"/>
</dbReference>
<dbReference type="InterPro" id="IPR006124">
    <property type="entry name" value="Metalloenzyme"/>
</dbReference>
<dbReference type="InterPro" id="IPR036646">
    <property type="entry name" value="PGAM_B_sf"/>
</dbReference>
<dbReference type="InterPro" id="IPR005995">
    <property type="entry name" value="Pgm_bpd_ind"/>
</dbReference>
<dbReference type="NCBIfam" id="TIGR01307">
    <property type="entry name" value="pgm_bpd_ind"/>
    <property type="match status" value="1"/>
</dbReference>
<dbReference type="NCBIfam" id="NF003897">
    <property type="entry name" value="PRK05434.1-5"/>
    <property type="match status" value="1"/>
</dbReference>
<dbReference type="PANTHER" id="PTHR31637">
    <property type="entry name" value="2,3-BISPHOSPHOGLYCERATE-INDEPENDENT PHOSPHOGLYCERATE MUTASE"/>
    <property type="match status" value="1"/>
</dbReference>
<dbReference type="PANTHER" id="PTHR31637:SF0">
    <property type="entry name" value="2,3-BISPHOSPHOGLYCERATE-INDEPENDENT PHOSPHOGLYCERATE MUTASE"/>
    <property type="match status" value="1"/>
</dbReference>
<dbReference type="Pfam" id="PF06415">
    <property type="entry name" value="iPGM_N"/>
    <property type="match status" value="1"/>
</dbReference>
<dbReference type="Pfam" id="PF01676">
    <property type="entry name" value="Metalloenzyme"/>
    <property type="match status" value="1"/>
</dbReference>
<dbReference type="PIRSF" id="PIRSF001492">
    <property type="entry name" value="IPGAM"/>
    <property type="match status" value="1"/>
</dbReference>
<dbReference type="SUPFAM" id="SSF64158">
    <property type="entry name" value="2,3-Bisphosphoglycerate-independent phosphoglycerate mutase, substrate-binding domain"/>
    <property type="match status" value="1"/>
</dbReference>
<dbReference type="SUPFAM" id="SSF53649">
    <property type="entry name" value="Alkaline phosphatase-like"/>
    <property type="match status" value="1"/>
</dbReference>
<name>GPMI_SHIFL</name>
<protein>
    <recommendedName>
        <fullName evidence="1">2,3-bisphosphoglycerate-independent phosphoglycerate mutase</fullName>
        <shortName evidence="1">BPG-independent PGAM</shortName>
        <shortName evidence="1">Phosphoglyceromutase</shortName>
        <shortName evidence="1">iPGM</shortName>
        <ecNumber evidence="1">5.4.2.12</ecNumber>
    </recommendedName>
</protein>